<reference key="1">
    <citation type="submission" date="2007-04" db="EMBL/GenBank/DDBJ databases">
        <title>Complete sequence of chromosome of Rhodobacter sphaeroides ATCC 17025.</title>
        <authorList>
            <consortium name="US DOE Joint Genome Institute"/>
            <person name="Copeland A."/>
            <person name="Lucas S."/>
            <person name="Lapidus A."/>
            <person name="Barry K."/>
            <person name="Detter J.C."/>
            <person name="Glavina del Rio T."/>
            <person name="Hammon N."/>
            <person name="Israni S."/>
            <person name="Dalin E."/>
            <person name="Tice H."/>
            <person name="Pitluck S."/>
            <person name="Chertkov O."/>
            <person name="Brettin T."/>
            <person name="Bruce D."/>
            <person name="Han C."/>
            <person name="Schmutz J."/>
            <person name="Larimer F."/>
            <person name="Land M."/>
            <person name="Hauser L."/>
            <person name="Kyrpides N."/>
            <person name="Kim E."/>
            <person name="Richardson P."/>
            <person name="Mackenzie C."/>
            <person name="Choudhary M."/>
            <person name="Donohue T.J."/>
            <person name="Kaplan S."/>
        </authorList>
    </citation>
    <scope>NUCLEOTIDE SEQUENCE [LARGE SCALE GENOMIC DNA]</scope>
    <source>
        <strain>ATCC 17025 / ATH 2.4.3</strain>
    </source>
</reference>
<gene>
    <name evidence="1" type="primary">mscL</name>
    <name type="ordered locus">Rsph17025_2443</name>
</gene>
<sequence length="146" mass="15348">MSILDEFRSFIAKGNVMDMAVGIIIGAAFTGIVSSLVADLINPVIGLITGGIDFSNVFVNLGDGDYTSLAAAREAGAPVFAYGAFITAVINFLIIAWVVFLLVKMVNRVKETALHKSPPAAKAEPAGPTQEQLLAEIRVLLKKASA</sequence>
<comment type="function">
    <text evidence="1">Channel that opens in response to stretch forces in the membrane lipid bilayer. May participate in the regulation of osmotic pressure changes within the cell.</text>
</comment>
<comment type="subunit">
    <text evidence="1">Homopentamer.</text>
</comment>
<comment type="subcellular location">
    <subcellularLocation>
        <location evidence="1">Cell inner membrane</location>
        <topology evidence="1">Multi-pass membrane protein</topology>
    </subcellularLocation>
</comment>
<comment type="similarity">
    <text evidence="1">Belongs to the MscL family.</text>
</comment>
<proteinExistence type="inferred from homology"/>
<dbReference type="EMBL" id="CP000661">
    <property type="protein sequence ID" value="ABP71331.1"/>
    <property type="molecule type" value="Genomic_DNA"/>
</dbReference>
<dbReference type="SMR" id="A4WVB7"/>
<dbReference type="STRING" id="349102.Rsph17025_2443"/>
<dbReference type="KEGG" id="rsq:Rsph17025_2443"/>
<dbReference type="eggNOG" id="COG1970">
    <property type="taxonomic scope" value="Bacteria"/>
</dbReference>
<dbReference type="HOGENOM" id="CLU_095787_0_1_5"/>
<dbReference type="BioCyc" id="RSPH349102:G1G8M-2518-MONOMER"/>
<dbReference type="GO" id="GO:0005886">
    <property type="term" value="C:plasma membrane"/>
    <property type="evidence" value="ECO:0007669"/>
    <property type="project" value="UniProtKB-SubCell"/>
</dbReference>
<dbReference type="GO" id="GO:0008381">
    <property type="term" value="F:mechanosensitive monoatomic ion channel activity"/>
    <property type="evidence" value="ECO:0007669"/>
    <property type="project" value="UniProtKB-UniRule"/>
</dbReference>
<dbReference type="Gene3D" id="1.10.1200.120">
    <property type="entry name" value="Large-conductance mechanosensitive channel, MscL, domain 1"/>
    <property type="match status" value="1"/>
</dbReference>
<dbReference type="HAMAP" id="MF_00115">
    <property type="entry name" value="MscL"/>
    <property type="match status" value="1"/>
</dbReference>
<dbReference type="InterPro" id="IPR019823">
    <property type="entry name" value="Mechanosensitive_channel_CS"/>
</dbReference>
<dbReference type="InterPro" id="IPR001185">
    <property type="entry name" value="MS_channel"/>
</dbReference>
<dbReference type="InterPro" id="IPR037673">
    <property type="entry name" value="MSC/AndL"/>
</dbReference>
<dbReference type="InterPro" id="IPR036019">
    <property type="entry name" value="MscL_channel"/>
</dbReference>
<dbReference type="NCBIfam" id="TIGR00220">
    <property type="entry name" value="mscL"/>
    <property type="match status" value="1"/>
</dbReference>
<dbReference type="NCBIfam" id="NF001843">
    <property type="entry name" value="PRK00567.1-4"/>
    <property type="match status" value="1"/>
</dbReference>
<dbReference type="NCBIfam" id="NF010557">
    <property type="entry name" value="PRK13952.1"/>
    <property type="match status" value="1"/>
</dbReference>
<dbReference type="PANTHER" id="PTHR30266:SF2">
    <property type="entry name" value="LARGE-CONDUCTANCE MECHANOSENSITIVE CHANNEL"/>
    <property type="match status" value="1"/>
</dbReference>
<dbReference type="PANTHER" id="PTHR30266">
    <property type="entry name" value="MECHANOSENSITIVE CHANNEL MSCL"/>
    <property type="match status" value="1"/>
</dbReference>
<dbReference type="Pfam" id="PF01741">
    <property type="entry name" value="MscL"/>
    <property type="match status" value="1"/>
</dbReference>
<dbReference type="PRINTS" id="PR01264">
    <property type="entry name" value="MECHCHANNEL"/>
</dbReference>
<dbReference type="SUPFAM" id="SSF81330">
    <property type="entry name" value="Gated mechanosensitive channel"/>
    <property type="match status" value="1"/>
</dbReference>
<dbReference type="PROSITE" id="PS01327">
    <property type="entry name" value="MSCL"/>
    <property type="match status" value="1"/>
</dbReference>
<accession>A4WVB7</accession>
<keyword id="KW-0997">Cell inner membrane</keyword>
<keyword id="KW-1003">Cell membrane</keyword>
<keyword id="KW-0407">Ion channel</keyword>
<keyword id="KW-0406">Ion transport</keyword>
<keyword id="KW-0472">Membrane</keyword>
<keyword id="KW-0812">Transmembrane</keyword>
<keyword id="KW-1133">Transmembrane helix</keyword>
<keyword id="KW-0813">Transport</keyword>
<name>MSCL_CERS5</name>
<organism>
    <name type="scientific">Cereibacter sphaeroides (strain ATCC 17025 / ATH 2.4.3)</name>
    <name type="common">Rhodobacter sphaeroides</name>
    <dbReference type="NCBI Taxonomy" id="349102"/>
    <lineage>
        <taxon>Bacteria</taxon>
        <taxon>Pseudomonadati</taxon>
        <taxon>Pseudomonadota</taxon>
        <taxon>Alphaproteobacteria</taxon>
        <taxon>Rhodobacterales</taxon>
        <taxon>Paracoccaceae</taxon>
        <taxon>Cereibacter</taxon>
    </lineage>
</organism>
<evidence type="ECO:0000255" key="1">
    <source>
        <dbReference type="HAMAP-Rule" id="MF_00115"/>
    </source>
</evidence>
<feature type="chain" id="PRO_1000015420" description="Large-conductance mechanosensitive channel">
    <location>
        <begin position="1"/>
        <end position="146"/>
    </location>
</feature>
<feature type="transmembrane region" description="Helical" evidence="1">
    <location>
        <begin position="21"/>
        <end position="41"/>
    </location>
</feature>
<feature type="transmembrane region" description="Helical" evidence="1">
    <location>
        <begin position="44"/>
        <end position="64"/>
    </location>
</feature>
<feature type="transmembrane region" description="Helical" evidence="1">
    <location>
        <begin position="83"/>
        <end position="103"/>
    </location>
</feature>
<protein>
    <recommendedName>
        <fullName evidence="1">Large-conductance mechanosensitive channel</fullName>
    </recommendedName>
</protein>